<comment type="function">
    <text>The plasma membrane ATPase of plants and fungi is a hydrogen ion pump. The proton gradient it generates drives the active transport of nutrients by H(+)-symport. The resulting external acidification and/or internal alkinization may mediate growth responses.</text>
</comment>
<comment type="catalytic activity">
    <reaction>
        <text>ATP + H2O + H(+)(in) = ADP + phosphate + 2 H(+)(out)</text>
        <dbReference type="Rhea" id="RHEA:20852"/>
        <dbReference type="ChEBI" id="CHEBI:15377"/>
        <dbReference type="ChEBI" id="CHEBI:15378"/>
        <dbReference type="ChEBI" id="CHEBI:30616"/>
        <dbReference type="ChEBI" id="CHEBI:43474"/>
        <dbReference type="ChEBI" id="CHEBI:456216"/>
        <dbReference type="EC" id="7.1.2.1"/>
    </reaction>
</comment>
<comment type="subcellular location">
    <subcellularLocation>
        <location>Cell membrane</location>
        <topology>Multi-pass membrane protein</topology>
    </subcellularLocation>
</comment>
<comment type="tissue specificity">
    <text>Expressed at high levels in root, stem, leaf and flower.</text>
</comment>
<comment type="similarity">
    <text evidence="3">Belongs to the cation transport ATPase (P-type) (TC 3.A.3) family. Type IIIA subfamily.</text>
</comment>
<sequence length="952" mass="105189">MAKAISLEEIKNETVDLEKIPIEEVFEQLKCTREGLSADEGASRLQIFGPNKLEEKNESKILKFLGFMWNPLSWVMEAAAVMAIALANGDGKPPDWQDFIGIICLLVINSTISFIEENNAGNAAAALMAGLAPKTKVLRDGRWSEQEAAILVPGDIISVKLGDIIPADARLLEGDPLKIDQSALTGESLPVTKNPGDEVFSGSTCKQGELEAVVIATGVHTFFGKAAHLVDSTNNVGHFQKVLTAIGNFCICSIAIGMLVEIIVMYPIQHRKYRDGIDNLLVLLIGGIPIAMPTVLSVTMAIGSHRLSQQGAITKRMTAIEEMAGMDVLCSDKTGTLTLNKLSVDRNLVEVFAKGVDKEYVLLLAARASRVENQDAIDACMVGMLADPKEARAGIREVHFLPFNPVDKRTALTYIDNNNNWHRASKGAPEQILDLCNAKEDVRRKVHSMMDKYAERGLRSLAVARRTVPEKSKESPGGRWEFVGLLPLFDPPRHDSAETIRRALNLGVNVKMITGDQLAIAKETGRRLGMGTNMYPSASLLGQDKDSAIASLPIEELIEKADGFAGVFPEHKYEIVKKLQERKHIVGMTGDGVNDAPALKKADIGIAVADATDAARGASDIVLTEPGLSVIISAVLTSRAIFQRMKNYTIYAVSITIRIVFGFMFIALIWKYDFSAFMVLIIAILNDGTIMTISKDRVKPSPMPDSWKLKEIFATGVVLGGYQALMTVVFFWAMHDTDFFSDKFGVKSLRNSDEEMMSALYLQVSIISQALIFVTRSRSWSFLERPGMLLVIAFMIAQLVATLIAVYANWAFARVKGCGWGWAGVIWLYSIIFYLPLDIMKFAIRYILSGKAWNNLLDNKTAFTTKKDYGKEEREAQWALAQRTLHGLQPPEATNLFNEKNSYRELSEIAEQAKRRAEMARLRELHTLKGHVESVVKLKGLDIETIQQHYTV</sequence>
<name>PMA4_NICPL</name>
<proteinExistence type="evidence at transcript level"/>
<gene>
    <name type="primary">PMA4</name>
</gene>
<organism>
    <name type="scientific">Nicotiana plumbaginifolia</name>
    <name type="common">Leadwort-leaved tobacco</name>
    <name type="synonym">Tex-Mex tobacco</name>
    <dbReference type="NCBI Taxonomy" id="4092"/>
    <lineage>
        <taxon>Eukaryota</taxon>
        <taxon>Viridiplantae</taxon>
        <taxon>Streptophyta</taxon>
        <taxon>Embryophyta</taxon>
        <taxon>Tracheophyta</taxon>
        <taxon>Spermatophyta</taxon>
        <taxon>Magnoliopsida</taxon>
        <taxon>eudicotyledons</taxon>
        <taxon>Gunneridae</taxon>
        <taxon>Pentapetalae</taxon>
        <taxon>asterids</taxon>
        <taxon>lamiids</taxon>
        <taxon>Solanales</taxon>
        <taxon>Solanaceae</taxon>
        <taxon>Nicotianoideae</taxon>
        <taxon>Nicotianeae</taxon>
        <taxon>Nicotiana</taxon>
    </lineage>
</organism>
<accession>Q03194</accession>
<keyword id="KW-0067">ATP-binding</keyword>
<keyword id="KW-1003">Cell membrane</keyword>
<keyword id="KW-0375">Hydrogen ion transport</keyword>
<keyword id="KW-0406">Ion transport</keyword>
<keyword id="KW-0460">Magnesium</keyword>
<keyword id="KW-0472">Membrane</keyword>
<keyword id="KW-0479">Metal-binding</keyword>
<keyword id="KW-0547">Nucleotide-binding</keyword>
<keyword id="KW-0597">Phosphoprotein</keyword>
<keyword id="KW-1278">Translocase</keyword>
<keyword id="KW-0812">Transmembrane</keyword>
<keyword id="KW-1133">Transmembrane helix</keyword>
<keyword id="KW-0813">Transport</keyword>
<dbReference type="EC" id="7.1.2.1"/>
<dbReference type="EMBL" id="X66737">
    <property type="protein sequence ID" value="CAA47275.1"/>
    <property type="molecule type" value="mRNA"/>
</dbReference>
<dbReference type="PIR" id="S33548">
    <property type="entry name" value="S33548"/>
</dbReference>
<dbReference type="SMR" id="Q03194"/>
<dbReference type="GO" id="GO:0005886">
    <property type="term" value="C:plasma membrane"/>
    <property type="evidence" value="ECO:0007669"/>
    <property type="project" value="UniProtKB-SubCell"/>
</dbReference>
<dbReference type="GO" id="GO:0005524">
    <property type="term" value="F:ATP binding"/>
    <property type="evidence" value="ECO:0007669"/>
    <property type="project" value="UniProtKB-KW"/>
</dbReference>
<dbReference type="GO" id="GO:0016887">
    <property type="term" value="F:ATP hydrolysis activity"/>
    <property type="evidence" value="ECO:0007669"/>
    <property type="project" value="InterPro"/>
</dbReference>
<dbReference type="GO" id="GO:0046872">
    <property type="term" value="F:metal ion binding"/>
    <property type="evidence" value="ECO:0007669"/>
    <property type="project" value="UniProtKB-KW"/>
</dbReference>
<dbReference type="GO" id="GO:0008553">
    <property type="term" value="F:P-type proton-exporting transporter activity"/>
    <property type="evidence" value="ECO:0007669"/>
    <property type="project" value="UniProtKB-EC"/>
</dbReference>
<dbReference type="GO" id="GO:0120029">
    <property type="term" value="P:proton export across plasma membrane"/>
    <property type="evidence" value="ECO:0007669"/>
    <property type="project" value="InterPro"/>
</dbReference>
<dbReference type="CDD" id="cd02076">
    <property type="entry name" value="P-type_ATPase_H"/>
    <property type="match status" value="1"/>
</dbReference>
<dbReference type="FunFam" id="1.20.1110.10:FF:000045">
    <property type="entry name" value="ATPase 4 plasma membrane-type"/>
    <property type="match status" value="1"/>
</dbReference>
<dbReference type="FunFam" id="2.70.150.10:FF:000004">
    <property type="entry name" value="Plasma membrane ATPase"/>
    <property type="match status" value="1"/>
</dbReference>
<dbReference type="FunFam" id="3.40.1110.10:FF:000004">
    <property type="entry name" value="Plasma membrane ATPase"/>
    <property type="match status" value="1"/>
</dbReference>
<dbReference type="FunFam" id="3.40.50.1000:FF:000211">
    <property type="entry name" value="Plasma membrane ATPase"/>
    <property type="match status" value="1"/>
</dbReference>
<dbReference type="Gene3D" id="6.10.140.890">
    <property type="match status" value="1"/>
</dbReference>
<dbReference type="Gene3D" id="3.40.1110.10">
    <property type="entry name" value="Calcium-transporting ATPase, cytoplasmic domain N"/>
    <property type="match status" value="1"/>
</dbReference>
<dbReference type="Gene3D" id="2.70.150.10">
    <property type="entry name" value="Calcium-transporting ATPase, cytoplasmic transduction domain A"/>
    <property type="match status" value="1"/>
</dbReference>
<dbReference type="Gene3D" id="1.20.1110.10">
    <property type="entry name" value="Calcium-transporting ATPase, transmembrane domain"/>
    <property type="match status" value="1"/>
</dbReference>
<dbReference type="Gene3D" id="3.40.50.1000">
    <property type="entry name" value="HAD superfamily/HAD-like"/>
    <property type="match status" value="1"/>
</dbReference>
<dbReference type="InterPro" id="IPR004014">
    <property type="entry name" value="ATPase_P-typ_cation-transptr_N"/>
</dbReference>
<dbReference type="InterPro" id="IPR023299">
    <property type="entry name" value="ATPase_P-typ_cyto_dom_N"/>
</dbReference>
<dbReference type="InterPro" id="IPR018303">
    <property type="entry name" value="ATPase_P-typ_P_site"/>
</dbReference>
<dbReference type="InterPro" id="IPR023298">
    <property type="entry name" value="ATPase_P-typ_TM_dom_sf"/>
</dbReference>
<dbReference type="InterPro" id="IPR008250">
    <property type="entry name" value="ATPase_P-typ_transduc_dom_A_sf"/>
</dbReference>
<dbReference type="InterPro" id="IPR036412">
    <property type="entry name" value="HAD-like_sf"/>
</dbReference>
<dbReference type="InterPro" id="IPR023214">
    <property type="entry name" value="HAD_sf"/>
</dbReference>
<dbReference type="InterPro" id="IPR006534">
    <property type="entry name" value="P-type_ATPase_IIIA"/>
</dbReference>
<dbReference type="InterPro" id="IPR001757">
    <property type="entry name" value="P_typ_ATPase"/>
</dbReference>
<dbReference type="InterPro" id="IPR044492">
    <property type="entry name" value="P_typ_ATPase_HD_dom"/>
</dbReference>
<dbReference type="NCBIfam" id="TIGR01647">
    <property type="entry name" value="ATPase-IIIA_H"/>
    <property type="match status" value="1"/>
</dbReference>
<dbReference type="NCBIfam" id="TIGR01494">
    <property type="entry name" value="ATPase_P-type"/>
    <property type="match status" value="2"/>
</dbReference>
<dbReference type="PANTHER" id="PTHR42861">
    <property type="entry name" value="CALCIUM-TRANSPORTING ATPASE"/>
    <property type="match status" value="1"/>
</dbReference>
<dbReference type="Pfam" id="PF00690">
    <property type="entry name" value="Cation_ATPase_N"/>
    <property type="match status" value="1"/>
</dbReference>
<dbReference type="Pfam" id="PF00122">
    <property type="entry name" value="E1-E2_ATPase"/>
    <property type="match status" value="1"/>
</dbReference>
<dbReference type="Pfam" id="PF00702">
    <property type="entry name" value="Hydrolase"/>
    <property type="match status" value="1"/>
</dbReference>
<dbReference type="PRINTS" id="PR00119">
    <property type="entry name" value="CATATPASE"/>
</dbReference>
<dbReference type="PRINTS" id="PR00120">
    <property type="entry name" value="HATPASE"/>
</dbReference>
<dbReference type="SFLD" id="SFLDS00003">
    <property type="entry name" value="Haloacid_Dehalogenase"/>
    <property type="match status" value="1"/>
</dbReference>
<dbReference type="SFLD" id="SFLDF00027">
    <property type="entry name" value="p-type_atpase"/>
    <property type="match status" value="1"/>
</dbReference>
<dbReference type="SMART" id="SM00831">
    <property type="entry name" value="Cation_ATPase_N"/>
    <property type="match status" value="1"/>
</dbReference>
<dbReference type="SUPFAM" id="SSF81653">
    <property type="entry name" value="Calcium ATPase, transduction domain A"/>
    <property type="match status" value="1"/>
</dbReference>
<dbReference type="SUPFAM" id="SSF81665">
    <property type="entry name" value="Calcium ATPase, transmembrane domain M"/>
    <property type="match status" value="1"/>
</dbReference>
<dbReference type="SUPFAM" id="SSF56784">
    <property type="entry name" value="HAD-like"/>
    <property type="match status" value="1"/>
</dbReference>
<dbReference type="PROSITE" id="PS00154">
    <property type="entry name" value="ATPASE_E1_E2"/>
    <property type="match status" value="1"/>
</dbReference>
<reference key="1">
    <citation type="journal article" date="1993" name="Plant Mol. Biol.">
        <title>Identification and characterization of a second plasma membrane H(+)-ATPase gene subfamily in Nicotiana plumbaginifolia.</title>
        <authorList>
            <person name="Moriau L."/>
            <person name="Bogaerts P."/>
            <person name="Jonniaux J.-L."/>
            <person name="Boutry M."/>
        </authorList>
    </citation>
    <scope>NUCLEOTIDE SEQUENCE [MRNA]</scope>
    <source>
        <tissue>Leaf</tissue>
    </source>
</reference>
<feature type="chain" id="PRO_0000046293" description="Plasma membrane ATPase 4">
    <location>
        <begin position="1"/>
        <end position="952"/>
    </location>
</feature>
<feature type="topological domain" description="Cytoplasmic" evidence="2">
    <location>
        <begin position="1"/>
        <end position="64"/>
    </location>
</feature>
<feature type="transmembrane region" description="Helical; Name=1" evidence="2">
    <location>
        <begin position="65"/>
        <end position="84"/>
    </location>
</feature>
<feature type="topological domain" description="Extracellular" evidence="2">
    <location>
        <begin position="85"/>
        <end position="96"/>
    </location>
</feature>
<feature type="transmembrane region" description="Helical; Name=2" evidence="2">
    <location>
        <begin position="97"/>
        <end position="117"/>
    </location>
</feature>
<feature type="topological domain" description="Cytoplasmic" evidence="2">
    <location>
        <begin position="118"/>
        <end position="246"/>
    </location>
</feature>
<feature type="transmembrane region" description="Helical; Name=3" evidence="2">
    <location>
        <begin position="247"/>
        <end position="267"/>
    </location>
</feature>
<feature type="topological domain" description="Extracellular" evidence="2">
    <location>
        <begin position="268"/>
        <end position="277"/>
    </location>
</feature>
<feature type="transmembrane region" description="Helical; Name=4" evidence="2">
    <location>
        <begin position="278"/>
        <end position="299"/>
    </location>
</feature>
<feature type="topological domain" description="Cytoplasmic" evidence="2">
    <location>
        <begin position="300"/>
        <end position="646"/>
    </location>
</feature>
<feature type="transmembrane region" description="Helical; Name=5" evidence="2">
    <location>
        <begin position="647"/>
        <end position="668"/>
    </location>
</feature>
<feature type="topological domain" description="Extracellular" evidence="2">
    <location>
        <begin position="669"/>
        <end position="673"/>
    </location>
</feature>
<feature type="transmembrane region" description="Helical; Name=6" evidence="2">
    <location>
        <begin position="674"/>
        <end position="696"/>
    </location>
</feature>
<feature type="topological domain" description="Cytoplasmic" evidence="2">
    <location>
        <begin position="697"/>
        <end position="712"/>
    </location>
</feature>
<feature type="transmembrane region" description="Helical; Name=7" evidence="2">
    <location>
        <begin position="713"/>
        <end position="733"/>
    </location>
</feature>
<feature type="topological domain" description="Extracellular" evidence="2">
    <location>
        <begin position="734"/>
        <end position="754"/>
    </location>
</feature>
<feature type="transmembrane region" description="Helical; Name=8" evidence="2">
    <location>
        <begin position="755"/>
        <end position="775"/>
    </location>
</feature>
<feature type="topological domain" description="Cytoplasmic" evidence="2">
    <location>
        <begin position="776"/>
        <end position="787"/>
    </location>
</feature>
<feature type="transmembrane region" description="Helical; Name=9" evidence="2">
    <location>
        <begin position="788"/>
        <end position="808"/>
    </location>
</feature>
<feature type="topological domain" description="Extracellular" evidence="2">
    <location>
        <begin position="809"/>
        <end position="817"/>
    </location>
</feature>
<feature type="transmembrane region" description="Helical; Name=10" evidence="2">
    <location>
        <begin position="818"/>
        <end position="838"/>
    </location>
</feature>
<feature type="topological domain" description="Cytoplasmic" evidence="2">
    <location>
        <begin position="839"/>
        <end position="952"/>
    </location>
</feature>
<feature type="active site" description="4-aspartylphosphate intermediate" evidence="1">
    <location>
        <position position="332"/>
    </location>
</feature>
<feature type="binding site" evidence="1">
    <location>
        <position position="591"/>
    </location>
    <ligand>
        <name>Mg(2+)</name>
        <dbReference type="ChEBI" id="CHEBI:18420"/>
    </ligand>
</feature>
<feature type="binding site" evidence="1">
    <location>
        <position position="595"/>
    </location>
    <ligand>
        <name>Mg(2+)</name>
        <dbReference type="ChEBI" id="CHEBI:18420"/>
    </ligand>
</feature>
<evidence type="ECO:0000250" key="1"/>
<evidence type="ECO:0000255" key="2"/>
<evidence type="ECO:0000305" key="3"/>
<protein>
    <recommendedName>
        <fullName>Plasma membrane ATPase 4</fullName>
        <ecNumber>7.1.2.1</ecNumber>
    </recommendedName>
    <alternativeName>
        <fullName>Proton pump 4</fullName>
    </alternativeName>
</protein>